<comment type="function">
    <text evidence="1">Displays ATPase and GTPase activities.</text>
</comment>
<comment type="similarity">
    <text evidence="1">Belongs to the RapZ-like family.</text>
</comment>
<feature type="chain" id="PRO_0000107712" description="Nucleotide-binding protein GSU1884">
    <location>
        <begin position="1"/>
        <end position="285"/>
    </location>
</feature>
<feature type="binding site" evidence="1">
    <location>
        <begin position="8"/>
        <end position="15"/>
    </location>
    <ligand>
        <name>ATP</name>
        <dbReference type="ChEBI" id="CHEBI:30616"/>
    </ligand>
</feature>
<feature type="binding site" evidence="1">
    <location>
        <begin position="59"/>
        <end position="62"/>
    </location>
    <ligand>
        <name>GTP</name>
        <dbReference type="ChEBI" id="CHEBI:37565"/>
    </ligand>
</feature>
<sequence length="285" mass="32039">MRVLVITGLSGSGKSTAVRVLEDEGFFCVDNLPVLLFPTIIDLVCRSGENVAGVALVMDIRGRDFIKGFEKVFQQISEAGHTVEVIFFDATDEVLVRRFSETRRRHPALESGSVPEGIRYEREQLAGLRRLATHVIDTSELNVHQLKELVHSRIKGESGTRPLTIHLQSFGYRFGIPLESDIVMDVRFLPNPHFVPELKAGTGLDENVRTYVLEKPETRQFLERFMDLLEFLVPSYQREGKSYLTVSVGCTGGRHRSVAIVEELRAFFAGLGLVVKVSHRDKEKG</sequence>
<gene>
    <name type="ordered locus">GSU1884</name>
</gene>
<protein>
    <recommendedName>
        <fullName evidence="1">Nucleotide-binding protein GSU1884</fullName>
    </recommendedName>
</protein>
<keyword id="KW-0067">ATP-binding</keyword>
<keyword id="KW-0342">GTP-binding</keyword>
<keyword id="KW-0547">Nucleotide-binding</keyword>
<keyword id="KW-1185">Reference proteome</keyword>
<name>Y1884_GEOSL</name>
<accession>Q74BZ3</accession>
<organism>
    <name type="scientific">Geobacter sulfurreducens (strain ATCC 51573 / DSM 12127 / PCA)</name>
    <dbReference type="NCBI Taxonomy" id="243231"/>
    <lineage>
        <taxon>Bacteria</taxon>
        <taxon>Pseudomonadati</taxon>
        <taxon>Thermodesulfobacteriota</taxon>
        <taxon>Desulfuromonadia</taxon>
        <taxon>Geobacterales</taxon>
        <taxon>Geobacteraceae</taxon>
        <taxon>Geobacter</taxon>
    </lineage>
</organism>
<evidence type="ECO:0000255" key="1">
    <source>
        <dbReference type="HAMAP-Rule" id="MF_00636"/>
    </source>
</evidence>
<dbReference type="EMBL" id="AE017180">
    <property type="protein sequence ID" value="AAR35260.1"/>
    <property type="molecule type" value="Genomic_DNA"/>
</dbReference>
<dbReference type="RefSeq" id="NP_952933.1">
    <property type="nucleotide sequence ID" value="NC_002939.5"/>
</dbReference>
<dbReference type="SMR" id="Q74BZ3"/>
<dbReference type="FunCoup" id="Q74BZ3">
    <property type="interactions" value="184"/>
</dbReference>
<dbReference type="STRING" id="243231.GSU1884"/>
<dbReference type="EnsemblBacteria" id="AAR35260">
    <property type="protein sequence ID" value="AAR35260"/>
    <property type="gene ID" value="GSU1884"/>
</dbReference>
<dbReference type="KEGG" id="gsu:GSU1884"/>
<dbReference type="PATRIC" id="fig|243231.5.peg.1922"/>
<dbReference type="eggNOG" id="COG1660">
    <property type="taxonomic scope" value="Bacteria"/>
</dbReference>
<dbReference type="HOGENOM" id="CLU_059558_0_0_7"/>
<dbReference type="InParanoid" id="Q74BZ3"/>
<dbReference type="OrthoDB" id="9784461at2"/>
<dbReference type="Proteomes" id="UP000000577">
    <property type="component" value="Chromosome"/>
</dbReference>
<dbReference type="GO" id="GO:0005524">
    <property type="term" value="F:ATP binding"/>
    <property type="evidence" value="ECO:0007669"/>
    <property type="project" value="UniProtKB-UniRule"/>
</dbReference>
<dbReference type="GO" id="GO:0005525">
    <property type="term" value="F:GTP binding"/>
    <property type="evidence" value="ECO:0007669"/>
    <property type="project" value="UniProtKB-UniRule"/>
</dbReference>
<dbReference type="GO" id="GO:0060090">
    <property type="term" value="F:molecular adaptor activity"/>
    <property type="evidence" value="ECO:0000318"/>
    <property type="project" value="GO_Central"/>
</dbReference>
<dbReference type="Gene3D" id="3.40.50.300">
    <property type="entry name" value="P-loop containing nucleotide triphosphate hydrolases"/>
    <property type="match status" value="1"/>
</dbReference>
<dbReference type="HAMAP" id="MF_00636">
    <property type="entry name" value="RapZ_like"/>
    <property type="match status" value="1"/>
</dbReference>
<dbReference type="InterPro" id="IPR027417">
    <property type="entry name" value="P-loop_NTPase"/>
</dbReference>
<dbReference type="InterPro" id="IPR005337">
    <property type="entry name" value="RapZ-like"/>
</dbReference>
<dbReference type="InterPro" id="IPR053930">
    <property type="entry name" value="RapZ-like_N"/>
</dbReference>
<dbReference type="InterPro" id="IPR053931">
    <property type="entry name" value="RapZ_C"/>
</dbReference>
<dbReference type="NCBIfam" id="NF003828">
    <property type="entry name" value="PRK05416.1"/>
    <property type="match status" value="1"/>
</dbReference>
<dbReference type="PANTHER" id="PTHR30448">
    <property type="entry name" value="RNASE ADAPTER PROTEIN RAPZ"/>
    <property type="match status" value="1"/>
</dbReference>
<dbReference type="PANTHER" id="PTHR30448:SF0">
    <property type="entry name" value="RNASE ADAPTER PROTEIN RAPZ"/>
    <property type="match status" value="1"/>
</dbReference>
<dbReference type="Pfam" id="PF22740">
    <property type="entry name" value="PapZ_C"/>
    <property type="match status" value="1"/>
</dbReference>
<dbReference type="Pfam" id="PF03668">
    <property type="entry name" value="RapZ-like_N"/>
    <property type="match status" value="1"/>
</dbReference>
<dbReference type="PIRSF" id="PIRSF005052">
    <property type="entry name" value="P-loopkin"/>
    <property type="match status" value="1"/>
</dbReference>
<dbReference type="SUPFAM" id="SSF52540">
    <property type="entry name" value="P-loop containing nucleoside triphosphate hydrolases"/>
    <property type="match status" value="1"/>
</dbReference>
<reference key="1">
    <citation type="journal article" date="2003" name="Science">
        <title>Genome of Geobacter sulfurreducens: metal reduction in subsurface environments.</title>
        <authorList>
            <person name="Methe B.A."/>
            <person name="Nelson K.E."/>
            <person name="Eisen J.A."/>
            <person name="Paulsen I.T."/>
            <person name="Nelson W.C."/>
            <person name="Heidelberg J.F."/>
            <person name="Wu D."/>
            <person name="Wu M."/>
            <person name="Ward N.L."/>
            <person name="Beanan M.J."/>
            <person name="Dodson R.J."/>
            <person name="Madupu R."/>
            <person name="Brinkac L.M."/>
            <person name="Daugherty S.C."/>
            <person name="DeBoy R.T."/>
            <person name="Durkin A.S."/>
            <person name="Gwinn M.L."/>
            <person name="Kolonay J.F."/>
            <person name="Sullivan S.A."/>
            <person name="Haft D.H."/>
            <person name="Selengut J."/>
            <person name="Davidsen T.M."/>
            <person name="Zafar N."/>
            <person name="White O."/>
            <person name="Tran B."/>
            <person name="Romero C."/>
            <person name="Forberger H.A."/>
            <person name="Weidman J.F."/>
            <person name="Khouri H.M."/>
            <person name="Feldblyum T.V."/>
            <person name="Utterback T.R."/>
            <person name="Van Aken S.E."/>
            <person name="Lovley D.R."/>
            <person name="Fraser C.M."/>
        </authorList>
    </citation>
    <scope>NUCLEOTIDE SEQUENCE [LARGE SCALE GENOMIC DNA]</scope>
    <source>
        <strain>ATCC 51573 / DSM 12127 / PCA</strain>
    </source>
</reference>
<proteinExistence type="inferred from homology"/>